<organism>
    <name type="scientific">Pelargonium hortorum</name>
    <name type="common">Common geranium</name>
    <name type="synonym">Pelargonium inquinans x Pelargonium zonale</name>
    <dbReference type="NCBI Taxonomy" id="4031"/>
    <lineage>
        <taxon>Eukaryota</taxon>
        <taxon>Viridiplantae</taxon>
        <taxon>Streptophyta</taxon>
        <taxon>Embryophyta</taxon>
        <taxon>Tracheophyta</taxon>
        <taxon>Spermatophyta</taxon>
        <taxon>Magnoliopsida</taxon>
        <taxon>eudicotyledons</taxon>
        <taxon>Gunneridae</taxon>
        <taxon>Pentapetalae</taxon>
        <taxon>rosids</taxon>
        <taxon>malvids</taxon>
        <taxon>Geraniales</taxon>
        <taxon>Geraniaceae</taxon>
        <taxon>Pelargonium</taxon>
    </lineage>
</organism>
<feature type="chain" id="PRO_0000276728" description="Small ribosomal subunit protein uS8c">
    <location>
        <begin position="1"/>
        <end position="134"/>
    </location>
</feature>
<reference key="1">
    <citation type="journal article" date="2006" name="Mol. Biol. Evol.">
        <title>The complete chloroplast genome sequence of Pelargonium x hortorum: organization and evolution of the largest and most highly rearranged chloroplast genome of land plants.</title>
        <authorList>
            <person name="Chumley T.W."/>
            <person name="Palmer J.D."/>
            <person name="Mower J.P."/>
            <person name="Fourcade H.M."/>
            <person name="Calie P.J."/>
            <person name="Boore J.L."/>
            <person name="Jansen R.K."/>
        </authorList>
    </citation>
    <scope>NUCLEOTIDE SEQUENCE [LARGE SCALE GENOMIC DNA]</scope>
    <source>
        <strain>cv. Ringo White</strain>
    </source>
</reference>
<proteinExistence type="inferred from homology"/>
<comment type="function">
    <text evidence="1">One of the primary rRNA binding proteins, it binds directly to 16S rRNA central domain where it helps coordinate assembly of the platform of the 30S subunit.</text>
</comment>
<comment type="subunit">
    <text evidence="1">Part of the 30S ribosomal subunit.</text>
</comment>
<comment type="subcellular location">
    <subcellularLocation>
        <location>Plastid</location>
        <location>Chloroplast</location>
    </subcellularLocation>
</comment>
<comment type="similarity">
    <text evidence="2">Belongs to the universal ribosomal protein uS8 family.</text>
</comment>
<accession>Q06FM9</accession>
<sequence>MGKDTLSEIVTSIRNADMAKKETVRITFTNIAQNIVTILLREGFIKNAREHRESKKSFLVLTLRHRRNRKGPSRTLFNLKRVSRPGLRIYSNYQKIPRILGGMGVAILSTSKGIMTDREARLKRIGGEILLYIW</sequence>
<dbReference type="EMBL" id="DQ897681">
    <property type="protein sequence ID" value="ABI17344.1"/>
    <property type="molecule type" value="Genomic_DNA"/>
</dbReference>
<dbReference type="EMBL" id="DQ897681">
    <property type="protein sequence ID" value="ABI17296.1"/>
    <property type="molecule type" value="Genomic_DNA"/>
</dbReference>
<dbReference type="RefSeq" id="YP_784104.1">
    <property type="nucleotide sequence ID" value="NC_008454.1"/>
</dbReference>
<dbReference type="RefSeq" id="YP_784152.1">
    <property type="nucleotide sequence ID" value="NC_008454.1"/>
</dbReference>
<dbReference type="SMR" id="Q06FM9"/>
<dbReference type="GeneID" id="4362834"/>
<dbReference type="GeneID" id="4362858"/>
<dbReference type="GO" id="GO:0009507">
    <property type="term" value="C:chloroplast"/>
    <property type="evidence" value="ECO:0007669"/>
    <property type="project" value="UniProtKB-SubCell"/>
</dbReference>
<dbReference type="GO" id="GO:1990904">
    <property type="term" value="C:ribonucleoprotein complex"/>
    <property type="evidence" value="ECO:0007669"/>
    <property type="project" value="UniProtKB-KW"/>
</dbReference>
<dbReference type="GO" id="GO:0005840">
    <property type="term" value="C:ribosome"/>
    <property type="evidence" value="ECO:0007669"/>
    <property type="project" value="UniProtKB-KW"/>
</dbReference>
<dbReference type="GO" id="GO:0019843">
    <property type="term" value="F:rRNA binding"/>
    <property type="evidence" value="ECO:0007669"/>
    <property type="project" value="UniProtKB-UniRule"/>
</dbReference>
<dbReference type="GO" id="GO:0003735">
    <property type="term" value="F:structural constituent of ribosome"/>
    <property type="evidence" value="ECO:0007669"/>
    <property type="project" value="InterPro"/>
</dbReference>
<dbReference type="GO" id="GO:0006412">
    <property type="term" value="P:translation"/>
    <property type="evidence" value="ECO:0007669"/>
    <property type="project" value="UniProtKB-UniRule"/>
</dbReference>
<dbReference type="FunFam" id="3.30.1490.10:FF:000001">
    <property type="entry name" value="30S ribosomal protein S8"/>
    <property type="match status" value="1"/>
</dbReference>
<dbReference type="Gene3D" id="3.30.1370.30">
    <property type="match status" value="1"/>
</dbReference>
<dbReference type="Gene3D" id="3.30.1490.10">
    <property type="match status" value="1"/>
</dbReference>
<dbReference type="HAMAP" id="MF_01302_B">
    <property type="entry name" value="Ribosomal_uS8_B"/>
    <property type="match status" value="1"/>
</dbReference>
<dbReference type="InterPro" id="IPR000630">
    <property type="entry name" value="Ribosomal_uS8"/>
</dbReference>
<dbReference type="InterPro" id="IPR047863">
    <property type="entry name" value="Ribosomal_uS8_CS"/>
</dbReference>
<dbReference type="InterPro" id="IPR035987">
    <property type="entry name" value="Ribosomal_uS8_sf"/>
</dbReference>
<dbReference type="NCBIfam" id="NF001109">
    <property type="entry name" value="PRK00136.1"/>
    <property type="match status" value="1"/>
</dbReference>
<dbReference type="PANTHER" id="PTHR11758">
    <property type="entry name" value="40S RIBOSOMAL PROTEIN S15A"/>
    <property type="match status" value="1"/>
</dbReference>
<dbReference type="Pfam" id="PF00410">
    <property type="entry name" value="Ribosomal_S8"/>
    <property type="match status" value="1"/>
</dbReference>
<dbReference type="SUPFAM" id="SSF56047">
    <property type="entry name" value="Ribosomal protein S8"/>
    <property type="match status" value="1"/>
</dbReference>
<dbReference type="PROSITE" id="PS00053">
    <property type="entry name" value="RIBOSOMAL_S8"/>
    <property type="match status" value="1"/>
</dbReference>
<geneLocation type="chloroplast"/>
<gene>
    <name type="primary">rps8</name>
</gene>
<protein>
    <recommendedName>
        <fullName evidence="2">Small ribosomal subunit protein uS8c</fullName>
    </recommendedName>
    <alternativeName>
        <fullName>30S ribosomal protein S8, chloroplastic</fullName>
    </alternativeName>
</protein>
<name>RR8_PELHO</name>
<keyword id="KW-0150">Chloroplast</keyword>
<keyword id="KW-0934">Plastid</keyword>
<keyword id="KW-0687">Ribonucleoprotein</keyword>
<keyword id="KW-0689">Ribosomal protein</keyword>
<keyword id="KW-0694">RNA-binding</keyword>
<keyword id="KW-0699">rRNA-binding</keyword>
<evidence type="ECO:0000250" key="1"/>
<evidence type="ECO:0000305" key="2"/>